<name>PNP_PROA2</name>
<accession>B4S5G5</accession>
<gene>
    <name evidence="1" type="primary">pnp</name>
    <name type="ordered locus">Paes_0506</name>
</gene>
<sequence length="734" mass="79779">MSMFIRKEIDLGSGKTLSIETGKMAKQADGSAIVRLNDTMVLATVVSSKTPPSPNQSFFPLQVEYREKYSAAGKFPGGFFKREGRPSEKEILSARLIDRALRPLFPDGYYQDTQIIISVISSDQINDADVLGGVAASAAIMVSDIPFQNSMSEVRVGRVNGEYIVNPNINELRDSDIDISIGGTENTICMLEGEMDEISEAEMLEAIRFGHEAIKKICALQNEIAAEVGKTARTFSAAKAPDNLRQSIAEICSNELKELAYMPLCKEERAEKTAEIYKNAKAQTLQRYQQEITPEVIAAEPEKALYLNEQIIGDAIHSIEKQVMREMILDDAKRLDGRRLDEVRPISIELGLIPRAHGSALFTRGETQALVTLTLGTKKDAQMIDTLTDDADKRFMLHYNFPPFSVGETGRVGGTSRREIGHGNLAERAIRKVAPAESAFPYTIRIVSDILESNGSSSMASVCGGALAAMDGGVPLRKPVSGIAMGLIKEGDRYAVLSDILGNEDHLGDMDFKVAGTADGITACQMDIKIDGLDYHILEQALEQALHGRLHILDKMNEAIQEPRTEIGKYAPKLTTIQIPVDAIGMVIGKGGETIRSITEETGAEINIEDDGTVTIASASGEGASAALETIKLLISKPEVGTVYSGKVRDIREDLGAFVEFLPKTDGLVHISEISNERVAKVSDHLKPGDKVKVKLVDVRKDPRTGKTRFALSIKALAEKSADNGASDKAEANR</sequence>
<organism>
    <name type="scientific">Prosthecochloris aestuarii (strain DSM 271 / SK 413)</name>
    <dbReference type="NCBI Taxonomy" id="290512"/>
    <lineage>
        <taxon>Bacteria</taxon>
        <taxon>Pseudomonadati</taxon>
        <taxon>Chlorobiota</taxon>
        <taxon>Chlorobiia</taxon>
        <taxon>Chlorobiales</taxon>
        <taxon>Chlorobiaceae</taxon>
        <taxon>Prosthecochloris</taxon>
    </lineage>
</organism>
<keyword id="KW-0963">Cytoplasm</keyword>
<keyword id="KW-0460">Magnesium</keyword>
<keyword id="KW-0479">Metal-binding</keyword>
<keyword id="KW-0548">Nucleotidyltransferase</keyword>
<keyword id="KW-0694">RNA-binding</keyword>
<keyword id="KW-0808">Transferase</keyword>
<feature type="chain" id="PRO_0000381912" description="Polyribonucleotide nucleotidyltransferase">
    <location>
        <begin position="1"/>
        <end position="734"/>
    </location>
</feature>
<feature type="domain" description="KH" evidence="1">
    <location>
        <begin position="572"/>
        <end position="631"/>
    </location>
</feature>
<feature type="domain" description="S1 motif" evidence="1">
    <location>
        <begin position="641"/>
        <end position="715"/>
    </location>
</feature>
<feature type="binding site" evidence="1">
    <location>
        <position position="505"/>
    </location>
    <ligand>
        <name>Mg(2+)</name>
        <dbReference type="ChEBI" id="CHEBI:18420"/>
    </ligand>
</feature>
<feature type="binding site" evidence="1">
    <location>
        <position position="511"/>
    </location>
    <ligand>
        <name>Mg(2+)</name>
        <dbReference type="ChEBI" id="CHEBI:18420"/>
    </ligand>
</feature>
<evidence type="ECO:0000255" key="1">
    <source>
        <dbReference type="HAMAP-Rule" id="MF_01595"/>
    </source>
</evidence>
<reference key="1">
    <citation type="submission" date="2008-06" db="EMBL/GenBank/DDBJ databases">
        <title>Complete sequence of chromosome of Prosthecochloris aestuarii DSM 271.</title>
        <authorList>
            <consortium name="US DOE Joint Genome Institute"/>
            <person name="Lucas S."/>
            <person name="Copeland A."/>
            <person name="Lapidus A."/>
            <person name="Glavina del Rio T."/>
            <person name="Dalin E."/>
            <person name="Tice H."/>
            <person name="Bruce D."/>
            <person name="Goodwin L."/>
            <person name="Pitluck S."/>
            <person name="Schmutz J."/>
            <person name="Larimer F."/>
            <person name="Land M."/>
            <person name="Hauser L."/>
            <person name="Kyrpides N."/>
            <person name="Anderson I."/>
            <person name="Liu Z."/>
            <person name="Li T."/>
            <person name="Zhao F."/>
            <person name="Overmann J."/>
            <person name="Bryant D.A."/>
            <person name="Richardson P."/>
        </authorList>
    </citation>
    <scope>NUCLEOTIDE SEQUENCE [LARGE SCALE GENOMIC DNA]</scope>
    <source>
        <strain>DSM 271 / SK 413</strain>
    </source>
</reference>
<dbReference type="EC" id="2.7.7.8" evidence="1"/>
<dbReference type="EMBL" id="CP001108">
    <property type="protein sequence ID" value="ACF45562.1"/>
    <property type="molecule type" value="Genomic_DNA"/>
</dbReference>
<dbReference type="SMR" id="B4S5G5"/>
<dbReference type="STRING" id="290512.Paes_0506"/>
<dbReference type="KEGG" id="paa:Paes_0506"/>
<dbReference type="eggNOG" id="COG1185">
    <property type="taxonomic scope" value="Bacteria"/>
</dbReference>
<dbReference type="HOGENOM" id="CLU_004217_2_2_10"/>
<dbReference type="Proteomes" id="UP000002725">
    <property type="component" value="Chromosome"/>
</dbReference>
<dbReference type="GO" id="GO:0005829">
    <property type="term" value="C:cytosol"/>
    <property type="evidence" value="ECO:0007669"/>
    <property type="project" value="TreeGrafter"/>
</dbReference>
<dbReference type="GO" id="GO:0000175">
    <property type="term" value="F:3'-5'-RNA exonuclease activity"/>
    <property type="evidence" value="ECO:0007669"/>
    <property type="project" value="TreeGrafter"/>
</dbReference>
<dbReference type="GO" id="GO:0000287">
    <property type="term" value="F:magnesium ion binding"/>
    <property type="evidence" value="ECO:0007669"/>
    <property type="project" value="UniProtKB-UniRule"/>
</dbReference>
<dbReference type="GO" id="GO:0004654">
    <property type="term" value="F:polyribonucleotide nucleotidyltransferase activity"/>
    <property type="evidence" value="ECO:0007669"/>
    <property type="project" value="UniProtKB-UniRule"/>
</dbReference>
<dbReference type="GO" id="GO:0003723">
    <property type="term" value="F:RNA binding"/>
    <property type="evidence" value="ECO:0007669"/>
    <property type="project" value="UniProtKB-UniRule"/>
</dbReference>
<dbReference type="GO" id="GO:0006402">
    <property type="term" value="P:mRNA catabolic process"/>
    <property type="evidence" value="ECO:0007669"/>
    <property type="project" value="UniProtKB-UniRule"/>
</dbReference>
<dbReference type="GO" id="GO:0006396">
    <property type="term" value="P:RNA processing"/>
    <property type="evidence" value="ECO:0007669"/>
    <property type="project" value="InterPro"/>
</dbReference>
<dbReference type="CDD" id="cd02393">
    <property type="entry name" value="KH-I_PNPase"/>
    <property type="match status" value="1"/>
</dbReference>
<dbReference type="CDD" id="cd11363">
    <property type="entry name" value="RNase_PH_PNPase_1"/>
    <property type="match status" value="1"/>
</dbReference>
<dbReference type="CDD" id="cd11364">
    <property type="entry name" value="RNase_PH_PNPase_2"/>
    <property type="match status" value="1"/>
</dbReference>
<dbReference type="CDD" id="cd04472">
    <property type="entry name" value="S1_PNPase"/>
    <property type="match status" value="1"/>
</dbReference>
<dbReference type="FunFam" id="3.30.1370.10:FF:000001">
    <property type="entry name" value="Polyribonucleotide nucleotidyltransferase"/>
    <property type="match status" value="1"/>
</dbReference>
<dbReference type="FunFam" id="3.30.230.70:FF:000001">
    <property type="entry name" value="Polyribonucleotide nucleotidyltransferase"/>
    <property type="match status" value="1"/>
</dbReference>
<dbReference type="FunFam" id="3.30.230.70:FF:000002">
    <property type="entry name" value="Polyribonucleotide nucleotidyltransferase"/>
    <property type="match status" value="1"/>
</dbReference>
<dbReference type="Gene3D" id="3.30.230.70">
    <property type="entry name" value="GHMP Kinase, N-terminal domain"/>
    <property type="match status" value="2"/>
</dbReference>
<dbReference type="Gene3D" id="3.30.1370.10">
    <property type="entry name" value="K Homology domain, type 1"/>
    <property type="match status" value="1"/>
</dbReference>
<dbReference type="Gene3D" id="2.40.50.140">
    <property type="entry name" value="Nucleic acid-binding proteins"/>
    <property type="match status" value="1"/>
</dbReference>
<dbReference type="HAMAP" id="MF_01595">
    <property type="entry name" value="PNPase"/>
    <property type="match status" value="1"/>
</dbReference>
<dbReference type="InterPro" id="IPR001247">
    <property type="entry name" value="ExoRNase_PH_dom1"/>
</dbReference>
<dbReference type="InterPro" id="IPR015847">
    <property type="entry name" value="ExoRNase_PH_dom2"/>
</dbReference>
<dbReference type="InterPro" id="IPR036345">
    <property type="entry name" value="ExoRNase_PH_dom2_sf"/>
</dbReference>
<dbReference type="InterPro" id="IPR004087">
    <property type="entry name" value="KH_dom"/>
</dbReference>
<dbReference type="InterPro" id="IPR004088">
    <property type="entry name" value="KH_dom_type_1"/>
</dbReference>
<dbReference type="InterPro" id="IPR036612">
    <property type="entry name" value="KH_dom_type_1_sf"/>
</dbReference>
<dbReference type="InterPro" id="IPR012340">
    <property type="entry name" value="NA-bd_OB-fold"/>
</dbReference>
<dbReference type="InterPro" id="IPR012162">
    <property type="entry name" value="PNPase"/>
</dbReference>
<dbReference type="InterPro" id="IPR027408">
    <property type="entry name" value="PNPase/RNase_PH_dom_sf"/>
</dbReference>
<dbReference type="InterPro" id="IPR015848">
    <property type="entry name" value="PNPase_PH_RNA-bd_bac/org-type"/>
</dbReference>
<dbReference type="InterPro" id="IPR020568">
    <property type="entry name" value="Ribosomal_Su5_D2-typ_SF"/>
</dbReference>
<dbReference type="InterPro" id="IPR003029">
    <property type="entry name" value="S1_domain"/>
</dbReference>
<dbReference type="NCBIfam" id="TIGR03591">
    <property type="entry name" value="polynuc_phos"/>
    <property type="match status" value="1"/>
</dbReference>
<dbReference type="NCBIfam" id="NF008805">
    <property type="entry name" value="PRK11824.1"/>
    <property type="match status" value="1"/>
</dbReference>
<dbReference type="PANTHER" id="PTHR11252">
    <property type="entry name" value="POLYRIBONUCLEOTIDE NUCLEOTIDYLTRANSFERASE"/>
    <property type="match status" value="1"/>
</dbReference>
<dbReference type="PANTHER" id="PTHR11252:SF0">
    <property type="entry name" value="POLYRIBONUCLEOTIDE NUCLEOTIDYLTRANSFERASE 1, MITOCHONDRIAL"/>
    <property type="match status" value="1"/>
</dbReference>
<dbReference type="Pfam" id="PF00013">
    <property type="entry name" value="KH_1"/>
    <property type="match status" value="1"/>
</dbReference>
<dbReference type="Pfam" id="PF03726">
    <property type="entry name" value="PNPase"/>
    <property type="match status" value="1"/>
</dbReference>
<dbReference type="Pfam" id="PF01138">
    <property type="entry name" value="RNase_PH"/>
    <property type="match status" value="2"/>
</dbReference>
<dbReference type="Pfam" id="PF03725">
    <property type="entry name" value="RNase_PH_C"/>
    <property type="match status" value="2"/>
</dbReference>
<dbReference type="Pfam" id="PF00575">
    <property type="entry name" value="S1"/>
    <property type="match status" value="1"/>
</dbReference>
<dbReference type="PIRSF" id="PIRSF005499">
    <property type="entry name" value="PNPase"/>
    <property type="match status" value="1"/>
</dbReference>
<dbReference type="SMART" id="SM00322">
    <property type="entry name" value="KH"/>
    <property type="match status" value="1"/>
</dbReference>
<dbReference type="SMART" id="SM00316">
    <property type="entry name" value="S1"/>
    <property type="match status" value="1"/>
</dbReference>
<dbReference type="SUPFAM" id="SSF54791">
    <property type="entry name" value="Eukaryotic type KH-domain (KH-domain type I)"/>
    <property type="match status" value="1"/>
</dbReference>
<dbReference type="SUPFAM" id="SSF50249">
    <property type="entry name" value="Nucleic acid-binding proteins"/>
    <property type="match status" value="1"/>
</dbReference>
<dbReference type="SUPFAM" id="SSF55666">
    <property type="entry name" value="Ribonuclease PH domain 2-like"/>
    <property type="match status" value="2"/>
</dbReference>
<dbReference type="SUPFAM" id="SSF54211">
    <property type="entry name" value="Ribosomal protein S5 domain 2-like"/>
    <property type="match status" value="2"/>
</dbReference>
<dbReference type="PROSITE" id="PS50084">
    <property type="entry name" value="KH_TYPE_1"/>
    <property type="match status" value="1"/>
</dbReference>
<dbReference type="PROSITE" id="PS50126">
    <property type="entry name" value="S1"/>
    <property type="match status" value="1"/>
</dbReference>
<protein>
    <recommendedName>
        <fullName evidence="1">Polyribonucleotide nucleotidyltransferase</fullName>
        <ecNumber evidence="1">2.7.7.8</ecNumber>
    </recommendedName>
    <alternativeName>
        <fullName evidence="1">Polynucleotide phosphorylase</fullName>
        <shortName evidence="1">PNPase</shortName>
    </alternativeName>
</protein>
<comment type="function">
    <text evidence="1">Involved in mRNA degradation. Catalyzes the phosphorolysis of single-stranded polyribonucleotides processively in the 3'- to 5'-direction.</text>
</comment>
<comment type="catalytic activity">
    <reaction evidence="1">
        <text>RNA(n+1) + phosphate = RNA(n) + a ribonucleoside 5'-diphosphate</text>
        <dbReference type="Rhea" id="RHEA:22096"/>
        <dbReference type="Rhea" id="RHEA-COMP:14527"/>
        <dbReference type="Rhea" id="RHEA-COMP:17342"/>
        <dbReference type="ChEBI" id="CHEBI:43474"/>
        <dbReference type="ChEBI" id="CHEBI:57930"/>
        <dbReference type="ChEBI" id="CHEBI:140395"/>
        <dbReference type="EC" id="2.7.7.8"/>
    </reaction>
</comment>
<comment type="cofactor">
    <cofactor evidence="1">
        <name>Mg(2+)</name>
        <dbReference type="ChEBI" id="CHEBI:18420"/>
    </cofactor>
</comment>
<comment type="subcellular location">
    <subcellularLocation>
        <location evidence="1">Cytoplasm</location>
    </subcellularLocation>
</comment>
<comment type="similarity">
    <text evidence="1">Belongs to the polyribonucleotide nucleotidyltransferase family.</text>
</comment>
<proteinExistence type="inferred from homology"/>